<reference key="1">
    <citation type="journal article" date="1992" name="Mol. Microbiol.">
        <title>Many group A streptococcal strains express two different immunoglobulin-binding proteins, encoded by closely linked genes: characterization of the proteins expressed by four strains of different M-type.</title>
        <authorList>
            <person name="Stenberg L."/>
            <person name="O'Toole P."/>
            <person name="Lindahl G."/>
        </authorList>
    </citation>
    <scope>NUCLEOTIDE SEQUENCE [GENOMIC DNA]</scope>
    <source>
        <strain>AP4 / Serotype M4</strain>
    </source>
</reference>
<reference key="2">
    <citation type="journal article" date="1992" name="Proc. Natl. Acad. Sci. U.S.A.">
        <title>Two major classes in the M protein family in group A streptococci.</title>
        <authorList>
            <person name="O'Toole P."/>
            <person name="Stenberg L."/>
            <person name="Rissler M."/>
            <person name="Lindahl G."/>
        </authorList>
    </citation>
    <scope>NUCLEOTIDE SEQUENCE [GENOMIC DNA]</scope>
    <source>
        <strain>AP4 / Serotype M4</strain>
    </source>
</reference>
<sequence>MSKTNPNKLYSLRKLKTGTASVAVDLTVLGTGLANTTDVKAESRRYQAPPRVLLQGKEANKVFEERKALEKQARDLGDTINHMSQTISEQSRKIAALKSEAELKNQQALEALNNKNKQISDLTNENAQLKEAIEGYVQTIQNASREIAAKQQELAAAKSQLEAKNAEIEALKQQDASKTEEIAKLQSEAATLENLLGSAKRELTELQAKLDTATAEKAKLESQVTTLENLLGSAKRELTDLQAKLDAANAEKEKLQSQAATLEKQLEATKKELADLQAKLAATNQEKEKLEAEAKALKEQLAKQAEELAKLKADKASGAQKPDTKPGNKEVPTRPSQTRTNTNKAPMAQTKRQLPSTGEETTNPFFTAAALTVIASAGVLALKRKEEN</sequence>
<evidence type="ECO:0000255" key="1">
    <source>
        <dbReference type="PROSITE-ProRule" id="PRU00477"/>
    </source>
</evidence>
<evidence type="ECO:0000255" key="2">
    <source>
        <dbReference type="PROSITE-ProRule" id="PRU01374"/>
    </source>
</evidence>
<evidence type="ECO:0000256" key="3">
    <source>
        <dbReference type="SAM" id="MobiDB-lite"/>
    </source>
</evidence>
<feature type="signal peptide">
    <location>
        <begin position="1"/>
        <end position="41"/>
    </location>
</feature>
<feature type="chain" id="PRO_0000005631" description="Fibrinogen- and Ig-binding protein">
    <location>
        <begin position="42"/>
        <end position="357"/>
    </location>
</feature>
<feature type="propeptide" id="PRO_0000005632" description="Removed by sortase" evidence="1">
    <location>
        <begin position="358"/>
        <end position="388"/>
    </location>
</feature>
<feature type="repeat" description="D 1" evidence="2">
    <location>
        <begin position="288"/>
        <end position="293"/>
    </location>
</feature>
<feature type="repeat" description="D 2" evidence="2">
    <location>
        <begin position="294"/>
        <end position="299"/>
    </location>
</feature>
<feature type="repeat" description="D 3" evidence="2">
    <location>
        <begin position="302"/>
        <end position="307"/>
    </location>
</feature>
<feature type="repeat" description="D 4" evidence="2">
    <location>
        <begin position="309"/>
        <end position="314"/>
    </location>
</feature>
<feature type="region of interest" description="Disordered" evidence="3">
    <location>
        <begin position="308"/>
        <end position="362"/>
    </location>
</feature>
<feature type="short sequence motif" description="LPXTG sorting signal" evidence="1">
    <location>
        <begin position="354"/>
        <end position="358"/>
    </location>
</feature>
<feature type="compositionally biased region" description="Basic and acidic residues" evidence="3">
    <location>
        <begin position="322"/>
        <end position="332"/>
    </location>
</feature>
<feature type="compositionally biased region" description="Polar residues" evidence="3">
    <location>
        <begin position="334"/>
        <end position="362"/>
    </location>
</feature>
<feature type="modified residue" description="Pentaglycyl murein peptidoglycan amidated threonine" evidence="1">
    <location>
        <position position="357"/>
    </location>
</feature>
<gene>
    <name type="primary">mrp4</name>
</gene>
<organism>
    <name type="scientific">Streptococcus pyogenes</name>
    <dbReference type="NCBI Taxonomy" id="1314"/>
    <lineage>
        <taxon>Bacteria</taxon>
        <taxon>Bacillati</taxon>
        <taxon>Bacillota</taxon>
        <taxon>Bacilli</taxon>
        <taxon>Lactobacillales</taxon>
        <taxon>Streptococcaceae</taxon>
        <taxon>Streptococcus</taxon>
    </lineage>
</organism>
<accession>P30141</accession>
<name>MRP4_STRPY</name>
<proteinExistence type="inferred from homology"/>
<comment type="function">
    <text>Binds IgG molecules of the Ig1, Ig2 and Ig4 subclasses, and also binds fibrinogen.</text>
</comment>
<comment type="subcellular location">
    <subcellularLocation>
        <location evidence="1">Secreted</location>
        <location evidence="1">Cell wall</location>
        <topology evidence="1">Peptidoglycan-anchor</topology>
    </subcellularLocation>
</comment>
<dbReference type="EMBL" id="M87831">
    <property type="protein sequence ID" value="AAA26930.1"/>
    <property type="molecule type" value="Genomic_DNA"/>
</dbReference>
<dbReference type="SMR" id="P30141"/>
<dbReference type="STRING" id="1314.SD89_08965"/>
<dbReference type="GO" id="GO:0005576">
    <property type="term" value="C:extracellular region"/>
    <property type="evidence" value="ECO:0007669"/>
    <property type="project" value="UniProtKB-KW"/>
</dbReference>
<dbReference type="GO" id="GO:0019864">
    <property type="term" value="F:IgG binding"/>
    <property type="evidence" value="ECO:0007669"/>
    <property type="project" value="UniProtKB-KW"/>
</dbReference>
<dbReference type="Gene3D" id="1.10.287.1490">
    <property type="match status" value="1"/>
</dbReference>
<dbReference type="InterPro" id="IPR019931">
    <property type="entry name" value="LPXTG_anchor"/>
</dbReference>
<dbReference type="InterPro" id="IPR019950">
    <property type="entry name" value="M_anchor"/>
</dbReference>
<dbReference type="InterPro" id="IPR049895">
    <property type="entry name" value="SMDRR"/>
</dbReference>
<dbReference type="InterPro" id="IPR005877">
    <property type="entry name" value="YSIRK_signal_dom"/>
</dbReference>
<dbReference type="NCBIfam" id="TIGR01167">
    <property type="entry name" value="LPXTG_anchor"/>
    <property type="match status" value="1"/>
</dbReference>
<dbReference type="NCBIfam" id="TIGR01168">
    <property type="entry name" value="YSIRK_signal"/>
    <property type="match status" value="1"/>
</dbReference>
<dbReference type="PANTHER" id="PTHR43941">
    <property type="entry name" value="STRUCTURAL MAINTENANCE OF CHROMOSOMES PROTEIN 2"/>
    <property type="match status" value="1"/>
</dbReference>
<dbReference type="Pfam" id="PF00746">
    <property type="entry name" value="Gram_pos_anchor"/>
    <property type="match status" value="1"/>
</dbReference>
<dbReference type="PRINTS" id="PR00015">
    <property type="entry name" value="GPOSANCHOR"/>
</dbReference>
<dbReference type="SUPFAM" id="SSF57997">
    <property type="entry name" value="Tropomyosin"/>
    <property type="match status" value="1"/>
</dbReference>
<dbReference type="PROSITE" id="PS50847">
    <property type="entry name" value="GRAM_POS_ANCHORING"/>
    <property type="match status" value="1"/>
</dbReference>
<dbReference type="PROSITE" id="PS52030">
    <property type="entry name" value="SMDRR"/>
    <property type="match status" value="1"/>
</dbReference>
<keyword id="KW-0134">Cell wall</keyword>
<keyword id="KW-0390">IgG-binding protein</keyword>
<keyword id="KW-0572">Peptidoglycan-anchor</keyword>
<keyword id="KW-0677">Repeat</keyword>
<keyword id="KW-0964">Secreted</keyword>
<keyword id="KW-0732">Signal</keyword>
<protein>
    <recommendedName>
        <fullName>Fibrinogen- and Ig-binding protein</fullName>
    </recommendedName>
    <alternativeName>
        <fullName>MRP protein</fullName>
    </alternativeName>
</protein>